<keyword id="KW-0249">Electron transport</keyword>
<keyword id="KW-0349">Heme</keyword>
<keyword id="KW-0408">Iron</keyword>
<keyword id="KW-0472">Membrane</keyword>
<keyword id="KW-0479">Metal-binding</keyword>
<keyword id="KW-0496">Mitochondrion</keyword>
<keyword id="KW-0999">Mitochondrion inner membrane</keyword>
<keyword id="KW-0679">Respiratory chain</keyword>
<keyword id="KW-0812">Transmembrane</keyword>
<keyword id="KW-1133">Transmembrane helix</keyword>
<keyword id="KW-0813">Transport</keyword>
<keyword id="KW-0830">Ubiquinone</keyword>
<feature type="chain" id="PRO_0000061193" description="Cytochrome b">
    <location>
        <begin position="1"/>
        <end position="379"/>
    </location>
</feature>
<feature type="transmembrane region" description="Helical" evidence="2">
    <location>
        <begin position="33"/>
        <end position="53"/>
    </location>
</feature>
<feature type="transmembrane region" description="Helical" evidence="2">
    <location>
        <begin position="77"/>
        <end position="98"/>
    </location>
</feature>
<feature type="transmembrane region" description="Helical" evidence="2">
    <location>
        <begin position="113"/>
        <end position="133"/>
    </location>
</feature>
<feature type="transmembrane region" description="Helical" evidence="2">
    <location>
        <begin position="178"/>
        <end position="198"/>
    </location>
</feature>
<feature type="transmembrane region" description="Helical" evidence="2">
    <location>
        <begin position="226"/>
        <end position="246"/>
    </location>
</feature>
<feature type="transmembrane region" description="Helical" evidence="2">
    <location>
        <begin position="288"/>
        <end position="308"/>
    </location>
</feature>
<feature type="transmembrane region" description="Helical" evidence="2">
    <location>
        <begin position="320"/>
        <end position="340"/>
    </location>
</feature>
<feature type="transmembrane region" description="Helical" evidence="2">
    <location>
        <begin position="347"/>
        <end position="367"/>
    </location>
</feature>
<feature type="binding site" description="axial binding residue" evidence="2">
    <location>
        <position position="83"/>
    </location>
    <ligand>
        <name>heme b</name>
        <dbReference type="ChEBI" id="CHEBI:60344"/>
        <label>b562</label>
    </ligand>
    <ligandPart>
        <name>Fe</name>
        <dbReference type="ChEBI" id="CHEBI:18248"/>
    </ligandPart>
</feature>
<feature type="binding site" description="axial binding residue" evidence="2">
    <location>
        <position position="97"/>
    </location>
    <ligand>
        <name>heme b</name>
        <dbReference type="ChEBI" id="CHEBI:60344"/>
        <label>b566</label>
    </ligand>
    <ligandPart>
        <name>Fe</name>
        <dbReference type="ChEBI" id="CHEBI:18248"/>
    </ligandPart>
</feature>
<feature type="binding site" description="axial binding residue" evidence="2">
    <location>
        <position position="182"/>
    </location>
    <ligand>
        <name>heme b</name>
        <dbReference type="ChEBI" id="CHEBI:60344"/>
        <label>b562</label>
    </ligand>
    <ligandPart>
        <name>Fe</name>
        <dbReference type="ChEBI" id="CHEBI:18248"/>
    </ligandPart>
</feature>
<feature type="binding site" description="axial binding residue" evidence="2">
    <location>
        <position position="196"/>
    </location>
    <ligand>
        <name>heme b</name>
        <dbReference type="ChEBI" id="CHEBI:60344"/>
        <label>b566</label>
    </ligand>
    <ligandPart>
        <name>Fe</name>
        <dbReference type="ChEBI" id="CHEBI:18248"/>
    </ligandPart>
</feature>
<feature type="binding site" evidence="2">
    <location>
        <position position="201"/>
    </location>
    <ligand>
        <name>a ubiquinone</name>
        <dbReference type="ChEBI" id="CHEBI:16389"/>
    </ligand>
</feature>
<feature type="sequence conflict" description="In Ref. 2; AAS00143." evidence="5" ref="2">
    <original>H</original>
    <variation>L</variation>
    <location>
        <position position="97"/>
    </location>
</feature>
<feature type="sequence conflict" description="In Ref. 2; AAS00143." evidence="5" ref="2">
    <original>A</original>
    <variation>P</variation>
    <location>
        <position position="346"/>
    </location>
</feature>
<name>CYB_MIRCO</name>
<geneLocation type="mitochondrion"/>
<accession>Q34972</accession>
<accession>Q5VJ51</accession>
<proteinExistence type="inferred from homology"/>
<sequence>MTNIRKMHPLMKIMNSSFIDLPAPSNISSWWNFGSLLGACLAIQIITGLFLAMHYTADTATAFSSVTHICRDVNQGWIIRYIHANGASMFFMCLFIHVGRGMYYGSFTLSETWNIGIILLFTVMATAFMGYVLPWGQMSFWGATVITNLLSAIPYIGTSLVEWIWGGFSVDKATLTRFFAFHFILPFIITALVMVHLLFLHETGSNNPLGTTSDSDKIPFHPYYTIKDLLGLLFLLLLLMMLVLFSPDLLGDPDNYTPANPLITPPHIKPEWYFLFAYAILRSIPNKLGGVLALIMSILILAILPLLQTTKQRSMVFRPFSQIMFWTLTADLFTLTWIGGQPVEYAFVIIGQIASILYFSLILIIMPTVSLIENNMLKW</sequence>
<dbReference type="EMBL" id="U53571">
    <property type="protein sequence ID" value="AAC50528.1"/>
    <property type="molecule type" value="Genomic_DNA"/>
</dbReference>
<dbReference type="EMBL" id="AY441462">
    <property type="protein sequence ID" value="AAS00143.1"/>
    <property type="molecule type" value="Genomic_DNA"/>
</dbReference>
<dbReference type="SMR" id="Q34972"/>
<dbReference type="GO" id="GO:0005743">
    <property type="term" value="C:mitochondrial inner membrane"/>
    <property type="evidence" value="ECO:0007669"/>
    <property type="project" value="UniProtKB-SubCell"/>
</dbReference>
<dbReference type="GO" id="GO:0045275">
    <property type="term" value="C:respiratory chain complex III"/>
    <property type="evidence" value="ECO:0007669"/>
    <property type="project" value="InterPro"/>
</dbReference>
<dbReference type="GO" id="GO:0046872">
    <property type="term" value="F:metal ion binding"/>
    <property type="evidence" value="ECO:0007669"/>
    <property type="project" value="UniProtKB-KW"/>
</dbReference>
<dbReference type="GO" id="GO:0008121">
    <property type="term" value="F:ubiquinol-cytochrome-c reductase activity"/>
    <property type="evidence" value="ECO:0007669"/>
    <property type="project" value="InterPro"/>
</dbReference>
<dbReference type="GO" id="GO:0006122">
    <property type="term" value="P:mitochondrial electron transport, ubiquinol to cytochrome c"/>
    <property type="evidence" value="ECO:0007669"/>
    <property type="project" value="TreeGrafter"/>
</dbReference>
<dbReference type="CDD" id="cd00290">
    <property type="entry name" value="cytochrome_b_C"/>
    <property type="match status" value="1"/>
</dbReference>
<dbReference type="CDD" id="cd00284">
    <property type="entry name" value="Cytochrome_b_N"/>
    <property type="match status" value="1"/>
</dbReference>
<dbReference type="FunFam" id="1.20.810.10:FF:000002">
    <property type="entry name" value="Cytochrome b"/>
    <property type="match status" value="1"/>
</dbReference>
<dbReference type="Gene3D" id="1.20.810.10">
    <property type="entry name" value="Cytochrome Bc1 Complex, Chain C"/>
    <property type="match status" value="1"/>
</dbReference>
<dbReference type="InterPro" id="IPR005798">
    <property type="entry name" value="Cyt_b/b6_C"/>
</dbReference>
<dbReference type="InterPro" id="IPR036150">
    <property type="entry name" value="Cyt_b/b6_C_sf"/>
</dbReference>
<dbReference type="InterPro" id="IPR005797">
    <property type="entry name" value="Cyt_b/b6_N"/>
</dbReference>
<dbReference type="InterPro" id="IPR027387">
    <property type="entry name" value="Cytb/b6-like_sf"/>
</dbReference>
<dbReference type="InterPro" id="IPR030689">
    <property type="entry name" value="Cytochrome_b"/>
</dbReference>
<dbReference type="InterPro" id="IPR048260">
    <property type="entry name" value="Cytochrome_b_C_euk/bac"/>
</dbReference>
<dbReference type="InterPro" id="IPR048259">
    <property type="entry name" value="Cytochrome_b_N_euk/bac"/>
</dbReference>
<dbReference type="InterPro" id="IPR016174">
    <property type="entry name" value="Di-haem_cyt_TM"/>
</dbReference>
<dbReference type="PANTHER" id="PTHR19271">
    <property type="entry name" value="CYTOCHROME B"/>
    <property type="match status" value="1"/>
</dbReference>
<dbReference type="PANTHER" id="PTHR19271:SF16">
    <property type="entry name" value="CYTOCHROME B"/>
    <property type="match status" value="1"/>
</dbReference>
<dbReference type="Pfam" id="PF00032">
    <property type="entry name" value="Cytochrom_B_C"/>
    <property type="match status" value="1"/>
</dbReference>
<dbReference type="Pfam" id="PF00033">
    <property type="entry name" value="Cytochrome_B"/>
    <property type="match status" value="1"/>
</dbReference>
<dbReference type="PIRSF" id="PIRSF038885">
    <property type="entry name" value="COB"/>
    <property type="match status" value="1"/>
</dbReference>
<dbReference type="SUPFAM" id="SSF81648">
    <property type="entry name" value="a domain/subunit of cytochrome bc1 complex (Ubiquinol-cytochrome c reductase)"/>
    <property type="match status" value="1"/>
</dbReference>
<dbReference type="SUPFAM" id="SSF81342">
    <property type="entry name" value="Transmembrane di-heme cytochromes"/>
    <property type="match status" value="1"/>
</dbReference>
<dbReference type="PROSITE" id="PS51003">
    <property type="entry name" value="CYTB_CTER"/>
    <property type="match status" value="1"/>
</dbReference>
<dbReference type="PROSITE" id="PS51002">
    <property type="entry name" value="CYTB_NTER"/>
    <property type="match status" value="1"/>
</dbReference>
<reference key="1">
    <citation type="journal article" date="1996" name="Proc. Natl. Acad. Sci. U.S.A.">
        <title>Ancient single origin for Malagasy primates.</title>
        <authorList>
            <person name="Yoder A.D."/>
            <person name="Cartmill M."/>
            <person name="Ruvolo M."/>
            <person name="Smith K."/>
            <person name="Vilgalys R."/>
        </authorList>
    </citation>
    <scope>NUCLEOTIDE SEQUENCE [GENOMIC DNA]</scope>
</reference>
<reference key="2">
    <citation type="submission" date="2003-10" db="EMBL/GenBank/DDBJ databases">
        <title>61 primate SINEs and the evolution of strepsirrhines.</title>
        <authorList>
            <person name="Roos C."/>
            <person name="Schmitz J."/>
            <person name="Zischler H."/>
        </authorList>
    </citation>
    <scope>NUCLEOTIDE SEQUENCE [GENOMIC DNA]</scope>
</reference>
<protein>
    <recommendedName>
        <fullName>Cytochrome b</fullName>
    </recommendedName>
    <alternativeName>
        <fullName>Complex III subunit 3</fullName>
    </alternativeName>
    <alternativeName>
        <fullName>Complex III subunit III</fullName>
    </alternativeName>
    <alternativeName>
        <fullName>Cytochrome b-c1 complex subunit 3</fullName>
    </alternativeName>
    <alternativeName>
        <fullName>Ubiquinol-cytochrome-c reductase complex cytochrome b subunit</fullName>
    </alternativeName>
</protein>
<evidence type="ECO:0000250" key="1"/>
<evidence type="ECO:0000250" key="2">
    <source>
        <dbReference type="UniProtKB" id="P00157"/>
    </source>
</evidence>
<evidence type="ECO:0000255" key="3">
    <source>
        <dbReference type="PROSITE-ProRule" id="PRU00967"/>
    </source>
</evidence>
<evidence type="ECO:0000255" key="4">
    <source>
        <dbReference type="PROSITE-ProRule" id="PRU00968"/>
    </source>
</evidence>
<evidence type="ECO:0000305" key="5"/>
<gene>
    <name type="primary">MT-CYB</name>
    <name type="synonym">COB</name>
    <name type="synonym">CYTB</name>
    <name type="synonym">MTCYB</name>
</gene>
<organism>
    <name type="scientific">Mirza coquereli</name>
    <name type="common">Coquerel's giant mouse lemur</name>
    <name type="synonym">Microcebus coquereli</name>
    <dbReference type="NCBI Taxonomy" id="47180"/>
    <lineage>
        <taxon>Eukaryota</taxon>
        <taxon>Metazoa</taxon>
        <taxon>Chordata</taxon>
        <taxon>Craniata</taxon>
        <taxon>Vertebrata</taxon>
        <taxon>Euteleostomi</taxon>
        <taxon>Mammalia</taxon>
        <taxon>Eutheria</taxon>
        <taxon>Euarchontoglires</taxon>
        <taxon>Primates</taxon>
        <taxon>Strepsirrhini</taxon>
        <taxon>Lemuriformes</taxon>
        <taxon>Cheirogaleidae</taxon>
        <taxon>Mirza</taxon>
    </lineage>
</organism>
<comment type="function">
    <text evidence="2">Component of the ubiquinol-cytochrome c reductase complex (complex III or cytochrome b-c1 complex) that is part of the mitochondrial respiratory chain. The b-c1 complex mediates electron transfer from ubiquinol to cytochrome c. Contributes to the generation of a proton gradient across the mitochondrial membrane that is then used for ATP synthesis.</text>
</comment>
<comment type="cofactor">
    <cofactor evidence="2">
        <name>heme b</name>
        <dbReference type="ChEBI" id="CHEBI:60344"/>
    </cofactor>
    <text evidence="2">Binds 2 heme b groups non-covalently.</text>
</comment>
<comment type="subunit">
    <text evidence="2">The cytochrome bc1 complex contains 11 subunits: 3 respiratory subunits (MT-CYB, CYC1 and UQCRFS1), 2 core proteins (UQCRC1 and UQCRC2) and 6 low-molecular weight proteins (UQCRH/QCR6, UQCRB/QCR7, UQCRQ/QCR8, UQCR10/QCR9, UQCR11/QCR10 and a cleavage product of UQCRFS1). This cytochrome bc1 complex then forms a dimer.</text>
</comment>
<comment type="subcellular location">
    <subcellularLocation>
        <location evidence="2">Mitochondrion inner membrane</location>
        <topology evidence="2">Multi-pass membrane protein</topology>
    </subcellularLocation>
</comment>
<comment type="miscellaneous">
    <text evidence="1">Heme 1 (or BL or b562) is low-potential and absorbs at about 562 nm, and heme 2 (or BH or b566) is high-potential and absorbs at about 566 nm.</text>
</comment>
<comment type="similarity">
    <text evidence="3 4">Belongs to the cytochrome b family.</text>
</comment>
<comment type="caution">
    <text evidence="2">The full-length protein contains only eight transmembrane helices, not nine as predicted by bioinformatics tools.</text>
</comment>